<comment type="function">
    <text evidence="1">This is one of the proteins that bind and probably mediate the attachment of the 5S RNA into the large ribosomal subunit, where it forms part of the central protuberance.</text>
</comment>
<comment type="subunit">
    <text evidence="1">Part of the 50S ribosomal subunit; part of the 5S rRNA/L5/L18/L25 subcomplex. Contacts the 5S and 23S rRNAs.</text>
</comment>
<comment type="similarity">
    <text evidence="1">Belongs to the universal ribosomal protein uL18 family.</text>
</comment>
<organism>
    <name type="scientific">Streptococcus agalactiae serotype V (strain ATCC BAA-611 / 2603 V/R)</name>
    <dbReference type="NCBI Taxonomy" id="208435"/>
    <lineage>
        <taxon>Bacteria</taxon>
        <taxon>Bacillati</taxon>
        <taxon>Bacillota</taxon>
        <taxon>Bacilli</taxon>
        <taxon>Lactobacillales</taxon>
        <taxon>Streptococcaceae</taxon>
        <taxon>Streptococcus</taxon>
    </lineage>
</organism>
<feature type="chain" id="PRO_0000131353" description="Large ribosomal subunit protein uL18">
    <location>
        <begin position="1"/>
        <end position="118"/>
    </location>
</feature>
<feature type="region of interest" description="Disordered" evidence="2">
    <location>
        <begin position="1"/>
        <end position="24"/>
    </location>
</feature>
<feature type="compositionally biased region" description="Basic residues" evidence="2">
    <location>
        <begin position="10"/>
        <end position="20"/>
    </location>
</feature>
<evidence type="ECO:0000255" key="1">
    <source>
        <dbReference type="HAMAP-Rule" id="MF_01337"/>
    </source>
</evidence>
<evidence type="ECO:0000256" key="2">
    <source>
        <dbReference type="SAM" id="MobiDB-lite"/>
    </source>
</evidence>
<evidence type="ECO:0000305" key="3"/>
<accession>Q8E2B8</accession>
<name>RL18_STRA5</name>
<reference key="1">
    <citation type="journal article" date="2002" name="Proc. Natl. Acad. Sci. U.S.A.">
        <title>Complete genome sequence and comparative genomic analysis of an emerging human pathogen, serotype V Streptococcus agalactiae.</title>
        <authorList>
            <person name="Tettelin H."/>
            <person name="Masignani V."/>
            <person name="Cieslewicz M.J."/>
            <person name="Eisen J.A."/>
            <person name="Peterson S.N."/>
            <person name="Wessels M.R."/>
            <person name="Paulsen I.T."/>
            <person name="Nelson K.E."/>
            <person name="Margarit I."/>
            <person name="Read T.D."/>
            <person name="Madoff L.C."/>
            <person name="Wolf A.M."/>
            <person name="Beanan M.J."/>
            <person name="Brinkac L.M."/>
            <person name="Daugherty S.C."/>
            <person name="DeBoy R.T."/>
            <person name="Durkin A.S."/>
            <person name="Kolonay J.F."/>
            <person name="Madupu R."/>
            <person name="Lewis M.R."/>
            <person name="Radune D."/>
            <person name="Fedorova N.B."/>
            <person name="Scanlan D."/>
            <person name="Khouri H.M."/>
            <person name="Mulligan S."/>
            <person name="Carty H.A."/>
            <person name="Cline R.T."/>
            <person name="Van Aken S.E."/>
            <person name="Gill J."/>
            <person name="Scarselli M."/>
            <person name="Mora M."/>
            <person name="Iacobini E.T."/>
            <person name="Brettoni C."/>
            <person name="Galli G."/>
            <person name="Mariani M."/>
            <person name="Vegni F."/>
            <person name="Maione D."/>
            <person name="Rinaudo D."/>
            <person name="Rappuoli R."/>
            <person name="Telford J.L."/>
            <person name="Kasper D.L."/>
            <person name="Grandi G."/>
            <person name="Fraser C.M."/>
        </authorList>
    </citation>
    <scope>NUCLEOTIDE SEQUENCE [LARGE SCALE GENOMIC DNA]</scope>
    <source>
        <strain>ATCC BAA-611 / 2603 V/R</strain>
    </source>
</reference>
<dbReference type="EMBL" id="AE009948">
    <property type="protein sequence ID" value="AAM98982.1"/>
    <property type="molecule type" value="Genomic_DNA"/>
</dbReference>
<dbReference type="RefSeq" id="NP_687110.1">
    <property type="nucleotide sequence ID" value="NC_004116.1"/>
</dbReference>
<dbReference type="RefSeq" id="WP_001865622.1">
    <property type="nucleotide sequence ID" value="NC_004116.1"/>
</dbReference>
<dbReference type="SMR" id="Q8E2B8"/>
<dbReference type="STRING" id="208435.SAG0074"/>
<dbReference type="GeneID" id="66885034"/>
<dbReference type="KEGG" id="sag:SAG0074"/>
<dbReference type="PATRIC" id="fig|208435.3.peg.73"/>
<dbReference type="HOGENOM" id="CLU_098841_0_1_9"/>
<dbReference type="OrthoDB" id="9810939at2"/>
<dbReference type="Proteomes" id="UP000000821">
    <property type="component" value="Chromosome"/>
</dbReference>
<dbReference type="GO" id="GO:0022625">
    <property type="term" value="C:cytosolic large ribosomal subunit"/>
    <property type="evidence" value="ECO:0007669"/>
    <property type="project" value="TreeGrafter"/>
</dbReference>
<dbReference type="GO" id="GO:0008097">
    <property type="term" value="F:5S rRNA binding"/>
    <property type="evidence" value="ECO:0007669"/>
    <property type="project" value="TreeGrafter"/>
</dbReference>
<dbReference type="GO" id="GO:0003735">
    <property type="term" value="F:structural constituent of ribosome"/>
    <property type="evidence" value="ECO:0007669"/>
    <property type="project" value="InterPro"/>
</dbReference>
<dbReference type="GO" id="GO:0006412">
    <property type="term" value="P:translation"/>
    <property type="evidence" value="ECO:0007669"/>
    <property type="project" value="UniProtKB-UniRule"/>
</dbReference>
<dbReference type="CDD" id="cd00432">
    <property type="entry name" value="Ribosomal_L18_L5e"/>
    <property type="match status" value="1"/>
</dbReference>
<dbReference type="FunFam" id="3.30.420.100:FF:000001">
    <property type="entry name" value="50S ribosomal protein L18"/>
    <property type="match status" value="1"/>
</dbReference>
<dbReference type="Gene3D" id="3.30.420.100">
    <property type="match status" value="1"/>
</dbReference>
<dbReference type="HAMAP" id="MF_01337_B">
    <property type="entry name" value="Ribosomal_uL18_B"/>
    <property type="match status" value="1"/>
</dbReference>
<dbReference type="InterPro" id="IPR004389">
    <property type="entry name" value="Ribosomal_uL18_bac-type"/>
</dbReference>
<dbReference type="InterPro" id="IPR005484">
    <property type="entry name" value="Ribosomal_uL18_bac/euk"/>
</dbReference>
<dbReference type="NCBIfam" id="TIGR00060">
    <property type="entry name" value="L18_bact"/>
    <property type="match status" value="1"/>
</dbReference>
<dbReference type="PANTHER" id="PTHR12899">
    <property type="entry name" value="39S RIBOSOMAL PROTEIN L18, MITOCHONDRIAL"/>
    <property type="match status" value="1"/>
</dbReference>
<dbReference type="PANTHER" id="PTHR12899:SF3">
    <property type="entry name" value="LARGE RIBOSOMAL SUBUNIT PROTEIN UL18M"/>
    <property type="match status" value="1"/>
</dbReference>
<dbReference type="Pfam" id="PF00861">
    <property type="entry name" value="Ribosomal_L18p"/>
    <property type="match status" value="1"/>
</dbReference>
<dbReference type="SUPFAM" id="SSF53137">
    <property type="entry name" value="Translational machinery components"/>
    <property type="match status" value="1"/>
</dbReference>
<protein>
    <recommendedName>
        <fullName evidence="1">Large ribosomal subunit protein uL18</fullName>
    </recommendedName>
    <alternativeName>
        <fullName evidence="3">50S ribosomal protein L18</fullName>
    </alternativeName>
</protein>
<proteinExistence type="inferred from homology"/>
<keyword id="KW-1185">Reference proteome</keyword>
<keyword id="KW-0687">Ribonucleoprotein</keyword>
<keyword id="KW-0689">Ribosomal protein</keyword>
<keyword id="KW-0694">RNA-binding</keyword>
<keyword id="KW-0699">rRNA-binding</keyword>
<sequence length="118" mass="12896">MISKPDKNKIRQKRHRRVRGKLSGTADRPRLNIFRSNTGIYAQVIDDVAGVTLASASTLDKEVSNGTKTEQAVVVGKLVAERAVAKGISEVVFDRGGYLYHGRVKALADSARENGLKF</sequence>
<gene>
    <name evidence="1" type="primary">rplR</name>
    <name type="ordered locus">SAG0074</name>
</gene>